<sequence>MPTIQQLVRKGRSPKVVNTKAPALQGNPMRRGVCTRVYTTTPKKPNSALRKVARVRLNGGIEVTAYIPGEGHNLQEHSIVLVRGGRVKDLPGVRYKIVRGALDTQGVKNRGQARSRYGAKKEKK</sequence>
<organism>
    <name type="scientific">Micrococcus luteus (strain ATCC 4698 / DSM 20030 / JCM 1464 / CCM 169 / CCUG 5858 / IAM 1056 / NBRC 3333 / NCIMB 9278 / NCTC 2665 / VKM Ac-2230)</name>
    <name type="common">Micrococcus lysodeikticus</name>
    <dbReference type="NCBI Taxonomy" id="465515"/>
    <lineage>
        <taxon>Bacteria</taxon>
        <taxon>Bacillati</taxon>
        <taxon>Actinomycetota</taxon>
        <taxon>Actinomycetes</taxon>
        <taxon>Micrococcales</taxon>
        <taxon>Micrococcaceae</taxon>
        <taxon>Micrococcus</taxon>
    </lineage>
</organism>
<protein>
    <recommendedName>
        <fullName evidence="2">Small ribosomal subunit protein uS12</fullName>
    </recommendedName>
    <alternativeName>
        <fullName evidence="4">30S ribosomal protein S12</fullName>
    </alternativeName>
</protein>
<keyword id="KW-0488">Methylation</keyword>
<keyword id="KW-1185">Reference proteome</keyword>
<keyword id="KW-0687">Ribonucleoprotein</keyword>
<keyword id="KW-0689">Ribosomal protein</keyword>
<keyword id="KW-0694">RNA-binding</keyword>
<keyword id="KW-0699">rRNA-binding</keyword>
<keyword id="KW-0820">tRNA-binding</keyword>
<comment type="function">
    <text evidence="2">With S4 and S5 plays an important role in translational accuracy.</text>
</comment>
<comment type="function">
    <text evidence="2">Interacts with and stabilizes bases of the 16S rRNA that are involved in tRNA selection in the A site and with the mRNA backbone. Located at the interface of the 30S and 50S subunits, it traverses the body of the 30S subunit contacting proteins on the other side and probably holding the rRNA structure together. The combined cluster of proteins S8, S12 and S17 appears to hold together the shoulder and platform of the 30S subunit.</text>
</comment>
<comment type="subunit">
    <text evidence="2">Part of the 30S ribosomal subunit. Contacts proteins S8 and S17. May interact with IF1 in the 30S initiation complex.</text>
</comment>
<comment type="similarity">
    <text evidence="2">Belongs to the universal ribosomal protein uS12 family.</text>
</comment>
<evidence type="ECO:0000250" key="1"/>
<evidence type="ECO:0000255" key="2">
    <source>
        <dbReference type="HAMAP-Rule" id="MF_00403"/>
    </source>
</evidence>
<evidence type="ECO:0000256" key="3">
    <source>
        <dbReference type="SAM" id="MobiDB-lite"/>
    </source>
</evidence>
<evidence type="ECO:0000305" key="4"/>
<name>RS12_MICLC</name>
<feature type="chain" id="PRO_1000205921" description="Small ribosomal subunit protein uS12">
    <location>
        <begin position="1"/>
        <end position="124"/>
    </location>
</feature>
<feature type="region of interest" description="Disordered" evidence="3">
    <location>
        <begin position="104"/>
        <end position="124"/>
    </location>
</feature>
<feature type="compositionally biased region" description="Basic residues" evidence="3">
    <location>
        <begin position="111"/>
        <end position="124"/>
    </location>
</feature>
<feature type="modified residue" description="3-methylthioaspartic acid" evidence="1">
    <location>
        <position position="89"/>
    </location>
</feature>
<reference key="1">
    <citation type="journal article" date="2010" name="J. Bacteriol.">
        <title>Genome sequence of the Fleming strain of Micrococcus luteus, a simple free-living actinobacterium.</title>
        <authorList>
            <person name="Young M."/>
            <person name="Artsatbanov V."/>
            <person name="Beller H.R."/>
            <person name="Chandra G."/>
            <person name="Chater K.F."/>
            <person name="Dover L.G."/>
            <person name="Goh E.B."/>
            <person name="Kahan T."/>
            <person name="Kaprelyants A.S."/>
            <person name="Kyrpides N."/>
            <person name="Lapidus A."/>
            <person name="Lowry S.R."/>
            <person name="Lykidis A."/>
            <person name="Mahillon J."/>
            <person name="Markowitz V."/>
            <person name="Mavromatis K."/>
            <person name="Mukamolova G.V."/>
            <person name="Oren A."/>
            <person name="Rokem J.S."/>
            <person name="Smith M.C."/>
            <person name="Young D.I."/>
            <person name="Greenblatt C.L."/>
        </authorList>
    </citation>
    <scope>NUCLEOTIDE SEQUENCE [LARGE SCALE GENOMIC DNA]</scope>
    <source>
        <strain>ATCC 4698 / DSM 20030 / JCM 1464 / CCM 169 / CCUG 5858 / IAM 1056 / NBRC 3333 / NCIMB 9278 / NCTC 2665 / VKM Ac-2230</strain>
    </source>
</reference>
<gene>
    <name evidence="2" type="primary">rpsL</name>
    <name type="ordered locus">Mlut_17230</name>
</gene>
<dbReference type="EMBL" id="CP001628">
    <property type="protein sequence ID" value="ACS31210.1"/>
    <property type="molecule type" value="Genomic_DNA"/>
</dbReference>
<dbReference type="RefSeq" id="WP_002854787.1">
    <property type="nucleotide sequence ID" value="NZ_WBMF01000001.1"/>
</dbReference>
<dbReference type="SMR" id="C5CC69"/>
<dbReference type="STRING" id="465515.Mlut_17230"/>
<dbReference type="EnsemblBacteria" id="ACS31210">
    <property type="protein sequence ID" value="ACS31210"/>
    <property type="gene ID" value="Mlut_17230"/>
</dbReference>
<dbReference type="GeneID" id="93364263"/>
<dbReference type="KEGG" id="mlu:Mlut_17230"/>
<dbReference type="eggNOG" id="COG0048">
    <property type="taxonomic scope" value="Bacteria"/>
</dbReference>
<dbReference type="HOGENOM" id="CLU_104295_1_2_11"/>
<dbReference type="Proteomes" id="UP000000738">
    <property type="component" value="Chromosome"/>
</dbReference>
<dbReference type="GO" id="GO:0015935">
    <property type="term" value="C:small ribosomal subunit"/>
    <property type="evidence" value="ECO:0007669"/>
    <property type="project" value="InterPro"/>
</dbReference>
<dbReference type="GO" id="GO:0019843">
    <property type="term" value="F:rRNA binding"/>
    <property type="evidence" value="ECO:0007669"/>
    <property type="project" value="UniProtKB-UniRule"/>
</dbReference>
<dbReference type="GO" id="GO:0003735">
    <property type="term" value="F:structural constituent of ribosome"/>
    <property type="evidence" value="ECO:0007669"/>
    <property type="project" value="InterPro"/>
</dbReference>
<dbReference type="GO" id="GO:0000049">
    <property type="term" value="F:tRNA binding"/>
    <property type="evidence" value="ECO:0007669"/>
    <property type="project" value="UniProtKB-UniRule"/>
</dbReference>
<dbReference type="GO" id="GO:0006412">
    <property type="term" value="P:translation"/>
    <property type="evidence" value="ECO:0007669"/>
    <property type="project" value="UniProtKB-UniRule"/>
</dbReference>
<dbReference type="CDD" id="cd03368">
    <property type="entry name" value="Ribosomal_S12"/>
    <property type="match status" value="1"/>
</dbReference>
<dbReference type="FunFam" id="2.40.50.140:FF:000001">
    <property type="entry name" value="30S ribosomal protein S12"/>
    <property type="match status" value="1"/>
</dbReference>
<dbReference type="Gene3D" id="2.40.50.140">
    <property type="entry name" value="Nucleic acid-binding proteins"/>
    <property type="match status" value="1"/>
</dbReference>
<dbReference type="HAMAP" id="MF_00403_B">
    <property type="entry name" value="Ribosomal_uS12_B"/>
    <property type="match status" value="1"/>
</dbReference>
<dbReference type="InterPro" id="IPR012340">
    <property type="entry name" value="NA-bd_OB-fold"/>
</dbReference>
<dbReference type="InterPro" id="IPR006032">
    <property type="entry name" value="Ribosomal_uS12"/>
</dbReference>
<dbReference type="InterPro" id="IPR005679">
    <property type="entry name" value="Ribosomal_uS12_bac"/>
</dbReference>
<dbReference type="NCBIfam" id="TIGR00981">
    <property type="entry name" value="rpsL_bact"/>
    <property type="match status" value="1"/>
</dbReference>
<dbReference type="PANTHER" id="PTHR11652">
    <property type="entry name" value="30S RIBOSOMAL PROTEIN S12 FAMILY MEMBER"/>
    <property type="match status" value="1"/>
</dbReference>
<dbReference type="Pfam" id="PF00164">
    <property type="entry name" value="Ribosom_S12_S23"/>
    <property type="match status" value="1"/>
</dbReference>
<dbReference type="PIRSF" id="PIRSF002133">
    <property type="entry name" value="Ribosomal_S12/S23"/>
    <property type="match status" value="1"/>
</dbReference>
<dbReference type="PRINTS" id="PR01034">
    <property type="entry name" value="RIBOSOMALS12"/>
</dbReference>
<dbReference type="SUPFAM" id="SSF50249">
    <property type="entry name" value="Nucleic acid-binding proteins"/>
    <property type="match status" value="1"/>
</dbReference>
<dbReference type="PROSITE" id="PS00055">
    <property type="entry name" value="RIBOSOMAL_S12"/>
    <property type="match status" value="1"/>
</dbReference>
<accession>C5CC69</accession>
<proteinExistence type="inferred from homology"/>